<accession>Q8EQU7</accession>
<gene>
    <name type="primary">rasP</name>
    <name type="ordered locus">OB1592</name>
</gene>
<protein>
    <recommendedName>
        <fullName>Zinc metalloprotease RasP</fullName>
        <ecNumber>3.4.24.-</ecNumber>
    </recommendedName>
    <alternativeName>
        <fullName>Regulating alternative sigma factor protease</fullName>
    </alternativeName>
    <alternativeName>
        <fullName>Regulating anti-sigma-W factor activity protease</fullName>
    </alternativeName>
</protein>
<reference key="1">
    <citation type="journal article" date="2002" name="Nucleic Acids Res.">
        <title>Genome sequence of Oceanobacillus iheyensis isolated from the Iheya Ridge and its unexpected adaptive capabilities to extreme environments.</title>
        <authorList>
            <person name="Takami H."/>
            <person name="Takaki Y."/>
            <person name="Uchiyama I."/>
        </authorList>
    </citation>
    <scope>NUCLEOTIDE SEQUENCE [LARGE SCALE GENOMIC DNA]</scope>
    <source>
        <strain>DSM 14371 / CIP 107618 / JCM 11309 / KCTC 3954 / HTE831</strain>
    </source>
</reference>
<proteinExistence type="inferred from homology"/>
<sequence>MTTVVAFILMFGVLVSIHEWGHLIFAKRAGMLVREFAIGFGPKIFSFTKNETLYTIRLIPAGGYVRVAGEDPEIIELKPGHHIGLEFNQAGEVSKIIVNNKSKHPYARVIEVENVDLDHKLIIEGYELDDDENRLSFNVNEKAMFVMDERETQIAPYNRQFASKSTGKRAMQLFAGPMMNFVLAIAIFLILGIIQGVPVEEAKLGEIQPDTPAEQAGFQQDDVITQIGDQSISTWEEFTSIVRENPGQELDMVIQRNGESQDISVVPGEAEAVNEVGDPITIGQIGVYQGFEKDVLGTFVYGIERTYDTTTMIIQNLFMLVTGQVSIELLSGPVGIYDATDQVVQTGFSNFLLWTAMLSINLGIINLVPLPALDGGRLLFVGLEAVRGKPIAPEKEGIFHFVGFALLMLLMIVVTWNDIQRLFL</sequence>
<keyword id="KW-1003">Cell membrane</keyword>
<keyword id="KW-0378">Hydrolase</keyword>
<keyword id="KW-0472">Membrane</keyword>
<keyword id="KW-0479">Metal-binding</keyword>
<keyword id="KW-0482">Metalloprotease</keyword>
<keyword id="KW-0645">Protease</keyword>
<keyword id="KW-1185">Reference proteome</keyword>
<keyword id="KW-0812">Transmembrane</keyword>
<keyword id="KW-1133">Transmembrane helix</keyword>
<keyword id="KW-0862">Zinc</keyword>
<dbReference type="EC" id="3.4.24.-"/>
<dbReference type="EMBL" id="BA000028">
    <property type="protein sequence ID" value="BAC13548.1"/>
    <property type="molecule type" value="Genomic_DNA"/>
</dbReference>
<dbReference type="RefSeq" id="WP_011065992.1">
    <property type="nucleotide sequence ID" value="NC_004193.1"/>
</dbReference>
<dbReference type="SMR" id="Q8EQU7"/>
<dbReference type="STRING" id="221109.gene:10733832"/>
<dbReference type="MEROPS" id="M50.011"/>
<dbReference type="KEGG" id="oih:OB1592"/>
<dbReference type="eggNOG" id="COG0750">
    <property type="taxonomic scope" value="Bacteria"/>
</dbReference>
<dbReference type="HOGENOM" id="CLU_025778_1_0_9"/>
<dbReference type="OrthoDB" id="9782003at2"/>
<dbReference type="PhylomeDB" id="Q8EQU7"/>
<dbReference type="Proteomes" id="UP000000822">
    <property type="component" value="Chromosome"/>
</dbReference>
<dbReference type="GO" id="GO:0005886">
    <property type="term" value="C:plasma membrane"/>
    <property type="evidence" value="ECO:0007669"/>
    <property type="project" value="UniProtKB-SubCell"/>
</dbReference>
<dbReference type="GO" id="GO:0046872">
    <property type="term" value="F:metal ion binding"/>
    <property type="evidence" value="ECO:0007669"/>
    <property type="project" value="UniProtKB-KW"/>
</dbReference>
<dbReference type="GO" id="GO:0004222">
    <property type="term" value="F:metalloendopeptidase activity"/>
    <property type="evidence" value="ECO:0007669"/>
    <property type="project" value="InterPro"/>
</dbReference>
<dbReference type="GO" id="GO:0006508">
    <property type="term" value="P:proteolysis"/>
    <property type="evidence" value="ECO:0007669"/>
    <property type="project" value="UniProtKB-KW"/>
</dbReference>
<dbReference type="CDD" id="cd23081">
    <property type="entry name" value="cpPDZ_EcRseP-like"/>
    <property type="match status" value="1"/>
</dbReference>
<dbReference type="CDD" id="cd06163">
    <property type="entry name" value="S2P-M50_PDZ_RseP-like"/>
    <property type="match status" value="1"/>
</dbReference>
<dbReference type="Gene3D" id="2.30.42.10">
    <property type="match status" value="1"/>
</dbReference>
<dbReference type="InterPro" id="IPR001478">
    <property type="entry name" value="PDZ"/>
</dbReference>
<dbReference type="InterPro" id="IPR041489">
    <property type="entry name" value="PDZ_6"/>
</dbReference>
<dbReference type="InterPro" id="IPR036034">
    <property type="entry name" value="PDZ_sf"/>
</dbReference>
<dbReference type="InterPro" id="IPR004387">
    <property type="entry name" value="Pept_M50_Zn"/>
</dbReference>
<dbReference type="InterPro" id="IPR008915">
    <property type="entry name" value="Peptidase_M50"/>
</dbReference>
<dbReference type="NCBIfam" id="TIGR00054">
    <property type="entry name" value="RIP metalloprotease RseP"/>
    <property type="match status" value="1"/>
</dbReference>
<dbReference type="PANTHER" id="PTHR42837:SF2">
    <property type="entry name" value="MEMBRANE METALLOPROTEASE ARASP2, CHLOROPLASTIC-RELATED"/>
    <property type="match status" value="1"/>
</dbReference>
<dbReference type="PANTHER" id="PTHR42837">
    <property type="entry name" value="REGULATOR OF SIGMA-E PROTEASE RSEP"/>
    <property type="match status" value="1"/>
</dbReference>
<dbReference type="Pfam" id="PF17820">
    <property type="entry name" value="PDZ_6"/>
    <property type="match status" value="1"/>
</dbReference>
<dbReference type="Pfam" id="PF02163">
    <property type="entry name" value="Peptidase_M50"/>
    <property type="match status" value="1"/>
</dbReference>
<dbReference type="SMART" id="SM00228">
    <property type="entry name" value="PDZ"/>
    <property type="match status" value="1"/>
</dbReference>
<dbReference type="SUPFAM" id="SSF50156">
    <property type="entry name" value="PDZ domain-like"/>
    <property type="match status" value="1"/>
</dbReference>
<dbReference type="PROSITE" id="PS00142">
    <property type="entry name" value="ZINC_PROTEASE"/>
    <property type="match status" value="1"/>
</dbReference>
<name>RASP_OCEIH</name>
<comment type="function">
    <text evidence="1">Is responsible for Site-2 cleavage of the RsiW anti-sigma factor. This results, after a third proteolytic step catalyzed by the ClpXP protease, in the release of SigW and the transcription activation of the genes under the control of the sigma-W factor (By similarity).</text>
</comment>
<comment type="cofactor">
    <cofactor evidence="1">
        <name>Zn(2+)</name>
        <dbReference type="ChEBI" id="CHEBI:29105"/>
    </cofactor>
</comment>
<comment type="subcellular location">
    <subcellularLocation>
        <location evidence="4">Cell membrane</location>
        <topology evidence="4">Multi-pass membrane protein</topology>
    </subcellularLocation>
</comment>
<comment type="similarity">
    <text evidence="4">Belongs to the peptidase M50B family.</text>
</comment>
<organism>
    <name type="scientific">Oceanobacillus iheyensis (strain DSM 14371 / CIP 107618 / JCM 11309 / KCTC 3954 / HTE831)</name>
    <dbReference type="NCBI Taxonomy" id="221109"/>
    <lineage>
        <taxon>Bacteria</taxon>
        <taxon>Bacillati</taxon>
        <taxon>Bacillota</taxon>
        <taxon>Bacilli</taxon>
        <taxon>Bacillales</taxon>
        <taxon>Bacillaceae</taxon>
        <taxon>Oceanobacillus</taxon>
    </lineage>
</organism>
<feature type="chain" id="PRO_0000248828" description="Zinc metalloprotease RasP">
    <location>
        <begin position="1"/>
        <end position="424"/>
    </location>
</feature>
<feature type="transmembrane region" description="Helical" evidence="2">
    <location>
        <begin position="5"/>
        <end position="25"/>
    </location>
</feature>
<feature type="transmembrane region" description="Helical" evidence="2">
    <location>
        <begin position="174"/>
        <end position="194"/>
    </location>
</feature>
<feature type="transmembrane region" description="Helical" evidence="2">
    <location>
        <begin position="317"/>
        <end position="337"/>
    </location>
</feature>
<feature type="transmembrane region" description="Helical" evidence="2">
    <location>
        <begin position="351"/>
        <end position="371"/>
    </location>
</feature>
<feature type="transmembrane region" description="Helical" evidence="2">
    <location>
        <begin position="396"/>
        <end position="416"/>
    </location>
</feature>
<feature type="domain" description="PDZ">
    <location>
        <begin position="184"/>
        <end position="269"/>
    </location>
</feature>
<feature type="active site" evidence="3">
    <location>
        <position position="19"/>
    </location>
</feature>
<feature type="binding site" evidence="3">
    <location>
        <position position="18"/>
    </location>
    <ligand>
        <name>Zn(2+)</name>
        <dbReference type="ChEBI" id="CHEBI:29105"/>
        <note>catalytic</note>
    </ligand>
</feature>
<feature type="binding site" evidence="3">
    <location>
        <position position="22"/>
    </location>
    <ligand>
        <name>Zn(2+)</name>
        <dbReference type="ChEBI" id="CHEBI:29105"/>
        <note>catalytic</note>
    </ligand>
</feature>
<evidence type="ECO:0000250" key="1"/>
<evidence type="ECO:0000255" key="2"/>
<evidence type="ECO:0000255" key="3">
    <source>
        <dbReference type="PROSITE-ProRule" id="PRU10095"/>
    </source>
</evidence>
<evidence type="ECO:0000305" key="4"/>